<evidence type="ECO:0000255" key="1">
    <source>
        <dbReference type="HAMAP-Rule" id="MF_01300"/>
    </source>
</evidence>
<evidence type="ECO:0000256" key="2">
    <source>
        <dbReference type="SAM" id="MobiDB-lite"/>
    </source>
</evidence>
<sequence length="442" mass="46367">MPKIFRSLYVQVLIAIVLGILVGFLFPSFGEGLKPLGDGFIKLIKMLIAPIIFATVVSGIAHMRDTKKVGRVGGKALIYFEVVTTFALVIGLVVANILKPGHGMNVNPATLDTSAISKYTQAAGEQSVADFLLHIIPNTLVSAFTEGDLLQVLLISVLFGFALTQLGTLGQKVLAGIEAVNSAVFVILGFVMRLAPIGAFGAMAFTIGKYGVGTLAQLAYLMVAFYATCLLFVFVVLGLIARFAGFSILKFIRFIKEELLLVLGTSSSESALPRLITKLEYAGANRSVVGLVVPAGYSFNLDGTSIYLTMATLFIAQATNTHLSLGQQLGILGVLLLTSKGAAGVTGSGFITLAATLSAVGHVPVAGLALILGIDRFMSEARALTNFVGNGVATLVIARSEKALDTNRLQRVLNGEVLPPATPEVAAEERGEGRGLDGPLPA</sequence>
<name>DCTA_DEIGD</name>
<feature type="chain" id="PRO_1000067443" description="C4-dicarboxylate transport protein">
    <location>
        <begin position="1"/>
        <end position="442"/>
    </location>
</feature>
<feature type="transmembrane region" description="Helical" evidence="1">
    <location>
        <begin position="10"/>
        <end position="30"/>
    </location>
</feature>
<feature type="transmembrane region" description="Helical" evidence="1">
    <location>
        <begin position="40"/>
        <end position="60"/>
    </location>
</feature>
<feature type="transmembrane region" description="Helical" evidence="1">
    <location>
        <begin position="77"/>
        <end position="97"/>
    </location>
</feature>
<feature type="transmembrane region" description="Helical" evidence="1">
    <location>
        <begin position="149"/>
        <end position="169"/>
    </location>
</feature>
<feature type="transmembrane region" description="Helical" evidence="1">
    <location>
        <begin position="185"/>
        <end position="205"/>
    </location>
</feature>
<feature type="transmembrane region" description="Helical" evidence="1">
    <location>
        <begin position="221"/>
        <end position="241"/>
    </location>
</feature>
<feature type="transmembrane region" description="Helical" evidence="1">
    <location>
        <begin position="288"/>
        <end position="308"/>
    </location>
</feature>
<feature type="transmembrane region" description="Helical" evidence="1">
    <location>
        <begin position="354"/>
        <end position="374"/>
    </location>
</feature>
<feature type="region of interest" description="Disordered" evidence="2">
    <location>
        <begin position="420"/>
        <end position="442"/>
    </location>
</feature>
<comment type="function">
    <text evidence="1">Responsible for the transport of dicarboxylates such as succinate, fumarate, and malate across the membrane.</text>
</comment>
<comment type="subcellular location">
    <subcellularLocation>
        <location evidence="1">Cell membrane</location>
        <topology evidence="1">Multi-pass membrane protein</topology>
    </subcellularLocation>
</comment>
<comment type="similarity">
    <text evidence="1">Belongs to the dicarboxylate/amino acid:cation symporter (DAACS) (TC 2.A.23) family.</text>
</comment>
<accession>Q1J1H5</accession>
<organism>
    <name type="scientific">Deinococcus geothermalis (strain DSM 11300 / CIP 105573 / AG-3a)</name>
    <dbReference type="NCBI Taxonomy" id="319795"/>
    <lineage>
        <taxon>Bacteria</taxon>
        <taxon>Thermotogati</taxon>
        <taxon>Deinococcota</taxon>
        <taxon>Deinococci</taxon>
        <taxon>Deinococcales</taxon>
        <taxon>Deinococcaceae</taxon>
        <taxon>Deinococcus</taxon>
    </lineage>
</organism>
<keyword id="KW-1003">Cell membrane</keyword>
<keyword id="KW-0472">Membrane</keyword>
<keyword id="KW-0769">Symport</keyword>
<keyword id="KW-0812">Transmembrane</keyword>
<keyword id="KW-1133">Transmembrane helix</keyword>
<keyword id="KW-0813">Transport</keyword>
<proteinExistence type="inferred from homology"/>
<gene>
    <name evidence="1" type="primary">dctA</name>
    <name type="ordered locus">Dgeo_0356</name>
</gene>
<reference key="1">
    <citation type="submission" date="2006-04" db="EMBL/GenBank/DDBJ databases">
        <title>Complete sequence of chromosome of Deinococcus geothermalis DSM 11300.</title>
        <authorList>
            <person name="Copeland A."/>
            <person name="Lucas S."/>
            <person name="Lapidus A."/>
            <person name="Barry K."/>
            <person name="Detter J.C."/>
            <person name="Glavina del Rio T."/>
            <person name="Hammon N."/>
            <person name="Israni S."/>
            <person name="Dalin E."/>
            <person name="Tice H."/>
            <person name="Pitluck S."/>
            <person name="Brettin T."/>
            <person name="Bruce D."/>
            <person name="Han C."/>
            <person name="Tapia R."/>
            <person name="Saunders E."/>
            <person name="Gilna P."/>
            <person name="Schmutz J."/>
            <person name="Larimer F."/>
            <person name="Land M."/>
            <person name="Hauser L."/>
            <person name="Kyrpides N."/>
            <person name="Kim E."/>
            <person name="Daly M.J."/>
            <person name="Fredrickson J.K."/>
            <person name="Makarova K.S."/>
            <person name="Gaidamakova E.K."/>
            <person name="Zhai M."/>
            <person name="Richardson P."/>
        </authorList>
    </citation>
    <scope>NUCLEOTIDE SEQUENCE [LARGE SCALE GENOMIC DNA]</scope>
    <source>
        <strain>DSM 11300 / CIP 105573 / AG-3a</strain>
    </source>
</reference>
<protein>
    <recommendedName>
        <fullName evidence="1">C4-dicarboxylate transport protein</fullName>
    </recommendedName>
</protein>
<dbReference type="EMBL" id="CP000359">
    <property type="protein sequence ID" value="ABF44659.1"/>
    <property type="molecule type" value="Genomic_DNA"/>
</dbReference>
<dbReference type="RefSeq" id="WP_011529503.1">
    <property type="nucleotide sequence ID" value="NC_008025.1"/>
</dbReference>
<dbReference type="SMR" id="Q1J1H5"/>
<dbReference type="STRING" id="319795.Dgeo_0356"/>
<dbReference type="TCDB" id="2.A.23.1.9">
    <property type="family name" value="the dicarboxylate/amino acid:cation (na(+) or h(+)) symporter (daacs) family"/>
</dbReference>
<dbReference type="KEGG" id="dge:Dgeo_0356"/>
<dbReference type="eggNOG" id="COG1301">
    <property type="taxonomic scope" value="Bacteria"/>
</dbReference>
<dbReference type="HOGENOM" id="CLU_019375_7_0_0"/>
<dbReference type="Proteomes" id="UP000002431">
    <property type="component" value="Chromosome"/>
</dbReference>
<dbReference type="GO" id="GO:0005886">
    <property type="term" value="C:plasma membrane"/>
    <property type="evidence" value="ECO:0007669"/>
    <property type="project" value="UniProtKB-SubCell"/>
</dbReference>
<dbReference type="GO" id="GO:0015138">
    <property type="term" value="F:fumarate transmembrane transporter activity"/>
    <property type="evidence" value="ECO:0007669"/>
    <property type="project" value="TreeGrafter"/>
</dbReference>
<dbReference type="GO" id="GO:0015366">
    <property type="term" value="F:malate:proton symporter activity"/>
    <property type="evidence" value="ECO:0007669"/>
    <property type="project" value="TreeGrafter"/>
</dbReference>
<dbReference type="GO" id="GO:0015141">
    <property type="term" value="F:succinate transmembrane transporter activity"/>
    <property type="evidence" value="ECO:0007669"/>
    <property type="project" value="TreeGrafter"/>
</dbReference>
<dbReference type="GO" id="GO:0070778">
    <property type="term" value="P:L-aspartate transmembrane transport"/>
    <property type="evidence" value="ECO:0007669"/>
    <property type="project" value="TreeGrafter"/>
</dbReference>
<dbReference type="FunFam" id="1.10.3860.10:FF:000001">
    <property type="entry name" value="C4-dicarboxylate transport protein"/>
    <property type="match status" value="1"/>
</dbReference>
<dbReference type="Gene3D" id="1.10.3860.10">
    <property type="entry name" value="Sodium:dicarboxylate symporter"/>
    <property type="match status" value="1"/>
</dbReference>
<dbReference type="HAMAP" id="MF_01300">
    <property type="entry name" value="C4_dicarb_transport"/>
    <property type="match status" value="1"/>
</dbReference>
<dbReference type="InterPro" id="IPR023954">
    <property type="entry name" value="C4_dicarb_transport"/>
</dbReference>
<dbReference type="InterPro" id="IPR001991">
    <property type="entry name" value="Na-dicarboxylate_symporter"/>
</dbReference>
<dbReference type="InterPro" id="IPR018107">
    <property type="entry name" value="Na-dicarboxylate_symporter_CS"/>
</dbReference>
<dbReference type="InterPro" id="IPR036458">
    <property type="entry name" value="Na:dicarbo_symporter_sf"/>
</dbReference>
<dbReference type="NCBIfam" id="NF002461">
    <property type="entry name" value="PRK01663.1"/>
    <property type="match status" value="1"/>
</dbReference>
<dbReference type="NCBIfam" id="NF009587">
    <property type="entry name" value="PRK13027.1"/>
    <property type="match status" value="1"/>
</dbReference>
<dbReference type="PANTHER" id="PTHR42865:SF1">
    <property type="entry name" value="AEROBIC C4-DICARBOXYLATE TRANSPORT PROTEIN"/>
    <property type="match status" value="1"/>
</dbReference>
<dbReference type="PANTHER" id="PTHR42865">
    <property type="entry name" value="PROTON/GLUTAMATE-ASPARTATE SYMPORTER"/>
    <property type="match status" value="1"/>
</dbReference>
<dbReference type="Pfam" id="PF00375">
    <property type="entry name" value="SDF"/>
    <property type="match status" value="1"/>
</dbReference>
<dbReference type="PRINTS" id="PR00173">
    <property type="entry name" value="EDTRNSPORT"/>
</dbReference>
<dbReference type="SUPFAM" id="SSF118215">
    <property type="entry name" value="Proton glutamate symport protein"/>
    <property type="match status" value="1"/>
</dbReference>
<dbReference type="PROSITE" id="PS00713">
    <property type="entry name" value="NA_DICARBOXYL_SYMP_1"/>
    <property type="match status" value="1"/>
</dbReference>
<dbReference type="PROSITE" id="PS00714">
    <property type="entry name" value="NA_DICARBOXYL_SYMP_2"/>
    <property type="match status" value="1"/>
</dbReference>